<name>PIEZO_DROME</name>
<feature type="chain" id="PRO_0000432404" description="Piezo-type mechanosensitive ion channel component">
    <location>
        <begin position="1"/>
        <end position="2551"/>
    </location>
</feature>
<feature type="transmembrane region" description="Helical; Name=1" evidence="1">
    <location>
        <begin position="5"/>
        <end position="25"/>
    </location>
</feature>
<feature type="transmembrane region" description="Helical; Name=2" evidence="1">
    <location>
        <begin position="27"/>
        <end position="47"/>
    </location>
</feature>
<feature type="transmembrane region" description="Helical; Name=3" evidence="1">
    <location>
        <begin position="56"/>
        <end position="76"/>
    </location>
</feature>
<feature type="transmembrane region" description="Helical; Name=4" evidence="1">
    <location>
        <begin position="106"/>
        <end position="126"/>
    </location>
</feature>
<feature type="transmembrane region" description="Helical; Name=5" evidence="1">
    <location>
        <begin position="204"/>
        <end position="226"/>
    </location>
</feature>
<feature type="transmembrane region" description="Helical; Name=6" evidence="1">
    <location>
        <begin position="231"/>
        <end position="250"/>
    </location>
</feature>
<feature type="transmembrane region" description="Helical; Name=7" evidence="1">
    <location>
        <begin position="256"/>
        <end position="276"/>
    </location>
</feature>
<feature type="transmembrane region" description="Helical; Name=8" evidence="1">
    <location>
        <begin position="320"/>
        <end position="340"/>
    </location>
</feature>
<feature type="transmembrane region" description="Helical; Name=9" evidence="1">
    <location>
        <begin position="395"/>
        <end position="415"/>
    </location>
</feature>
<feature type="transmembrane region" description="Helical; Name=10" evidence="1">
    <location>
        <begin position="424"/>
        <end position="444"/>
    </location>
</feature>
<feature type="transmembrane region" description="Helical; Name=11" evidence="1">
    <location>
        <begin position="463"/>
        <end position="483"/>
    </location>
</feature>
<feature type="transmembrane region" description="Helical; Name=12" evidence="1">
    <location>
        <begin position="516"/>
        <end position="536"/>
    </location>
</feature>
<feature type="transmembrane region" description="Helical; Name=13" evidence="1">
    <location>
        <begin position="548"/>
        <end position="568"/>
    </location>
</feature>
<feature type="transmembrane region" description="Helical; Name=14" evidence="1">
    <location>
        <begin position="588"/>
        <end position="608"/>
    </location>
</feature>
<feature type="transmembrane region" description="Helical; Name=15" evidence="1">
    <location>
        <begin position="611"/>
        <end position="631"/>
    </location>
</feature>
<feature type="transmembrane region" description="Helical; Name=16" evidence="1">
    <location>
        <begin position="639"/>
        <end position="659"/>
    </location>
</feature>
<feature type="transmembrane region" description="Helical; Name=17" evidence="1">
    <location>
        <begin position="695"/>
        <end position="715"/>
    </location>
</feature>
<feature type="transmembrane region" description="Helical; Name=18" evidence="1">
    <location>
        <begin position="819"/>
        <end position="839"/>
    </location>
</feature>
<feature type="transmembrane region" description="Helical; Name=19" evidence="1">
    <location>
        <begin position="857"/>
        <end position="877"/>
    </location>
</feature>
<feature type="transmembrane region" description="Helical; Name=20" evidence="1">
    <location>
        <begin position="910"/>
        <end position="930"/>
    </location>
</feature>
<feature type="transmembrane region" description="Helical; Name=21" evidence="1">
    <location>
        <begin position="973"/>
        <end position="993"/>
    </location>
</feature>
<feature type="transmembrane region" description="Helical; Name=22" evidence="1">
    <location>
        <begin position="994"/>
        <end position="1014"/>
    </location>
</feature>
<feature type="transmembrane region" description="Helical; Name=23" evidence="1">
    <location>
        <begin position="1022"/>
        <end position="1042"/>
    </location>
</feature>
<feature type="transmembrane region" description="Helical; Name=24" evidence="1">
    <location>
        <begin position="1071"/>
        <end position="1091"/>
    </location>
</feature>
<feature type="transmembrane region" description="Helical; Name=25" evidence="1">
    <location>
        <begin position="1152"/>
        <end position="1172"/>
    </location>
</feature>
<feature type="transmembrane region" description="Helical; Name=26" evidence="1">
    <location>
        <begin position="1174"/>
        <end position="1194"/>
    </location>
</feature>
<feature type="transmembrane region" description="Helical; Name=27" evidence="1">
    <location>
        <begin position="1198"/>
        <end position="1218"/>
    </location>
</feature>
<feature type="transmembrane region" description="Helical; Name=28" evidence="1">
    <location>
        <begin position="1239"/>
        <end position="1259"/>
    </location>
</feature>
<feature type="transmembrane region" description="Helical; Name=29" evidence="1">
    <location>
        <begin position="1275"/>
        <end position="1295"/>
    </location>
</feature>
<feature type="transmembrane region" description="Helical; Name=30" evidence="1">
    <location>
        <begin position="1718"/>
        <end position="1738"/>
    </location>
</feature>
<feature type="transmembrane region" description="Helical; Name=31" evidence="1">
    <location>
        <begin position="1741"/>
        <end position="1761"/>
    </location>
</feature>
<feature type="transmembrane region" description="Helical; Name=32" evidence="1">
    <location>
        <begin position="1770"/>
        <end position="1790"/>
    </location>
</feature>
<feature type="transmembrane region" description="Helical; Name=33" evidence="1">
    <location>
        <begin position="1817"/>
        <end position="1837"/>
    </location>
</feature>
<feature type="transmembrane region" description="Helical; Name=34" evidence="1">
    <location>
        <begin position="1937"/>
        <end position="1957"/>
    </location>
</feature>
<feature type="transmembrane region" description="Helical; Name=35" evidence="1">
    <location>
        <begin position="1979"/>
        <end position="1999"/>
    </location>
</feature>
<feature type="transmembrane region" description="Helical; Name=36" evidence="1">
    <location>
        <begin position="2008"/>
        <end position="2028"/>
    </location>
</feature>
<feature type="transmembrane region" description="Helical; Name=37" evidence="1">
    <location>
        <begin position="2033"/>
        <end position="2053"/>
    </location>
</feature>
<feature type="transmembrane region" description="Helical; Name=38" evidence="1">
    <location>
        <begin position="2075"/>
        <end position="2095"/>
    </location>
</feature>
<feature type="transmembrane region" description="Helical; Name=39" evidence="1">
    <location>
        <begin position="2151"/>
        <end position="2171"/>
    </location>
</feature>
<feature type="transmembrane region" description="Helical; Name=40" evidence="1">
    <location>
        <begin position="2431"/>
        <end position="2451"/>
    </location>
</feature>
<feature type="region of interest" description="Disordered" evidence="2">
    <location>
        <begin position="354"/>
        <end position="375"/>
    </location>
</feature>
<feature type="region of interest" description="Disordered" evidence="2">
    <location>
        <begin position="731"/>
        <end position="772"/>
    </location>
</feature>
<feature type="region of interest" description="Disordered" evidence="2">
    <location>
        <begin position="1426"/>
        <end position="1521"/>
    </location>
</feature>
<feature type="region of interest" description="Disordered" evidence="2">
    <location>
        <begin position="1592"/>
        <end position="1658"/>
    </location>
</feature>
<feature type="region of interest" description="Disordered" evidence="2">
    <location>
        <begin position="1854"/>
        <end position="1876"/>
    </location>
</feature>
<feature type="region of interest" description="Disordered" evidence="2">
    <location>
        <begin position="2522"/>
        <end position="2551"/>
    </location>
</feature>
<feature type="compositionally biased region" description="Polar residues" evidence="2">
    <location>
        <begin position="363"/>
        <end position="375"/>
    </location>
</feature>
<feature type="compositionally biased region" description="Polar residues" evidence="2">
    <location>
        <begin position="731"/>
        <end position="741"/>
    </location>
</feature>
<feature type="compositionally biased region" description="Basic and acidic residues" evidence="2">
    <location>
        <begin position="1430"/>
        <end position="1448"/>
    </location>
</feature>
<feature type="compositionally biased region" description="Low complexity" evidence="2">
    <location>
        <begin position="1466"/>
        <end position="1477"/>
    </location>
</feature>
<feature type="compositionally biased region" description="Basic and acidic residues" evidence="2">
    <location>
        <begin position="1497"/>
        <end position="1511"/>
    </location>
</feature>
<feature type="compositionally biased region" description="Low complexity" evidence="2">
    <location>
        <begin position="1621"/>
        <end position="1634"/>
    </location>
</feature>
<feature type="compositionally biased region" description="Low complexity" evidence="2">
    <location>
        <begin position="1644"/>
        <end position="1658"/>
    </location>
</feature>
<feature type="sequence conflict" description="In Ref. 1; AFB77909." evidence="6" ref="1">
    <location>
        <begin position="1640"/>
        <end position="1642"/>
    </location>
</feature>
<feature type="sequence conflict" description="In Ref. 1; AFB77909." evidence="6" ref="1">
    <original>Y</original>
    <variation>H</variation>
    <location>
        <position position="2326"/>
    </location>
</feature>
<accession>M9MSG8</accession>
<accession>H6X2P4</accession>
<comment type="function">
    <text evidence="3 4 5">Component of a mechanosensitive channel required for rapidly adapting mechanically activated (MA) currents (PubMed:22343891, PubMed:22343900). Plays a major role in nociception (response to strong or painful touch) (PubMed:22343891). Required for maintaining the mechanosensitivity of tarsal bristle mechanosensors (PubMed:32649914). During their evalulation of potential egg-laying sites, females determine the softest substrate for their eggs first by making a coarse evaluation of substrate hardness using mechanosensitive channels nan and Piezo in the leg tarsal bristles, followed by a much finer assessment using nan, iav and Tmc mechanosensitive channels on the labellum (PubMed:32649914). Acts in the nompC- and nan-expressing neurons of the female leg tarsals, to sense the mild differences in egg-laying substrate stiffness (PubMed:32649914).</text>
</comment>
<comment type="subcellular location">
    <subcellularLocation>
        <location evidence="4">Cell membrane</location>
        <topology evidence="6">Multi-pass membrane protein</topology>
    </subcellularLocation>
</comment>
<comment type="disruption phenotype">
    <text evidence="3 5">Viable and fertile, with no apparent coordination defects (PubMed:22343891). Flies have significant defects in detection of strong touch stimuli, however detection of gentle touch and temperature is unaffected (PubMed:22343891). Decreases firing frequencies of adult leg tarsal bristles (PubMed:32649914). In females, no effect on texture selection during egg-laying (PubMed:32649914). RNAi-mediated knockdown in NompC-expressing neurons, reduces the female's preference for softer egg-laying substrates (PubMed:32649914).</text>
</comment>
<comment type="miscellaneous">
    <text evidence="6">Piezo comes from the Greek 'piesi' meaning pressure.</text>
</comment>
<comment type="similarity">
    <text evidence="6">Belongs to the PIEZO (TC 1.A.75) family.</text>
</comment>
<dbReference type="EMBL" id="JQ425255">
    <property type="protein sequence ID" value="AFB77909.1"/>
    <property type="molecule type" value="mRNA"/>
</dbReference>
<dbReference type="EMBL" id="AE014134">
    <property type="protein sequence ID" value="ADV36969.1"/>
    <property type="molecule type" value="Genomic_DNA"/>
</dbReference>
<dbReference type="RefSeq" id="NP_001188719.1">
    <property type="nucleotide sequence ID" value="NM_001201790.2"/>
</dbReference>
<dbReference type="SMR" id="M9MSG8"/>
<dbReference type="FunCoup" id="M9MSG8">
    <property type="interactions" value="355"/>
</dbReference>
<dbReference type="STRING" id="7227.FBpp0312565"/>
<dbReference type="PaxDb" id="7227-FBpp0289561"/>
<dbReference type="EnsemblMetazoa" id="FBtr0335179">
    <property type="protein sequence ID" value="FBpp0307172"/>
    <property type="gene ID" value="FBgn0264953"/>
</dbReference>
<dbReference type="GeneID" id="34112"/>
<dbReference type="KEGG" id="dme:Dmel_CG44122"/>
<dbReference type="AGR" id="FB:FBgn0264953"/>
<dbReference type="CTD" id="34112"/>
<dbReference type="FlyBase" id="FBgn0264953">
    <property type="gene designation" value="Piezo"/>
</dbReference>
<dbReference type="VEuPathDB" id="VectorBase:FBgn0264953"/>
<dbReference type="eggNOG" id="KOG1893">
    <property type="taxonomic scope" value="Eukaryota"/>
</dbReference>
<dbReference type="GeneTree" id="ENSGT00940000166986"/>
<dbReference type="InParanoid" id="M9MSG8"/>
<dbReference type="OrthoDB" id="303066at2759"/>
<dbReference type="BioGRID-ORCS" id="34112">
    <property type="hits" value="0 hits in 3 CRISPR screens"/>
</dbReference>
<dbReference type="GenomeRNAi" id="34112"/>
<dbReference type="PRO" id="PR:M9MSG8"/>
<dbReference type="Proteomes" id="UP000000803">
    <property type="component" value="Chromosome 2L"/>
</dbReference>
<dbReference type="Bgee" id="FBgn0264953">
    <property type="expression patterns" value="Expressed in nociceptive neuron in imaginal disc-derived wing and 223 other cell types or tissues"/>
</dbReference>
<dbReference type="ExpressionAtlas" id="M9MSG8">
    <property type="expression patterns" value="baseline and differential"/>
</dbReference>
<dbReference type="GO" id="GO:0005886">
    <property type="term" value="C:plasma membrane"/>
    <property type="evidence" value="ECO:0007005"/>
    <property type="project" value="FlyBase"/>
</dbReference>
<dbReference type="GO" id="GO:0008381">
    <property type="term" value="F:mechanosensitive monoatomic ion channel activity"/>
    <property type="evidence" value="ECO:0000314"/>
    <property type="project" value="FlyBase"/>
</dbReference>
<dbReference type="GO" id="GO:0005261">
    <property type="term" value="F:monoatomic cation channel activity"/>
    <property type="evidence" value="ECO:0000318"/>
    <property type="project" value="GO_Central"/>
</dbReference>
<dbReference type="GO" id="GO:0071260">
    <property type="term" value="P:cellular response to mechanical stimulus"/>
    <property type="evidence" value="ECO:0000315"/>
    <property type="project" value="FlyBase"/>
</dbReference>
<dbReference type="GO" id="GO:0050982">
    <property type="term" value="P:detection of mechanical stimulus"/>
    <property type="evidence" value="ECO:0000318"/>
    <property type="project" value="GO_Central"/>
</dbReference>
<dbReference type="GO" id="GO:0050965">
    <property type="term" value="P:detection of temperature stimulus involved in sensory perception of pain"/>
    <property type="evidence" value="ECO:0000315"/>
    <property type="project" value="FlyBase"/>
</dbReference>
<dbReference type="GO" id="GO:0007638">
    <property type="term" value="P:mechanosensory behavior"/>
    <property type="evidence" value="ECO:0000315"/>
    <property type="project" value="FlyBase"/>
</dbReference>
<dbReference type="GO" id="GO:0098655">
    <property type="term" value="P:monoatomic cation transmembrane transport"/>
    <property type="evidence" value="ECO:0000314"/>
    <property type="project" value="FlyBase"/>
</dbReference>
<dbReference type="GO" id="GO:0034220">
    <property type="term" value="P:monoatomic ion transmembrane transport"/>
    <property type="evidence" value="ECO:0000315"/>
    <property type="project" value="UniProtKB"/>
</dbReference>
<dbReference type="GO" id="GO:0042391">
    <property type="term" value="P:regulation of membrane potential"/>
    <property type="evidence" value="ECO:0000318"/>
    <property type="project" value="GO_Central"/>
</dbReference>
<dbReference type="InterPro" id="IPR027272">
    <property type="entry name" value="Piezo"/>
</dbReference>
<dbReference type="InterPro" id="IPR031334">
    <property type="entry name" value="Piezo_cap_dom"/>
</dbReference>
<dbReference type="InterPro" id="IPR056770">
    <property type="entry name" value="Piezo_THU9_anchor"/>
</dbReference>
<dbReference type="InterPro" id="IPR056769">
    <property type="entry name" value="Piezo_TM1-24"/>
</dbReference>
<dbReference type="InterPro" id="IPR031805">
    <property type="entry name" value="Piezo_TM25-28"/>
</dbReference>
<dbReference type="InterPro" id="IPR056768">
    <property type="entry name" value="THU_Piezo"/>
</dbReference>
<dbReference type="PANTHER" id="PTHR47049">
    <property type="entry name" value="PIEZO-TYPE MECHANOSENSITIVE ION CHANNEL HOMOLOG"/>
    <property type="match status" value="1"/>
</dbReference>
<dbReference type="PANTHER" id="PTHR47049:SF2">
    <property type="entry name" value="PIEZO-TYPE MECHANOSENSITIVE ION CHANNEL HOMOLOG"/>
    <property type="match status" value="1"/>
</dbReference>
<dbReference type="Pfam" id="PF12166">
    <property type="entry name" value="Piezo_cap"/>
    <property type="match status" value="1"/>
</dbReference>
<dbReference type="Pfam" id="PF24874">
    <property type="entry name" value="Piezo_THU9_anchor"/>
    <property type="match status" value="1"/>
</dbReference>
<dbReference type="Pfam" id="PF24871">
    <property type="entry name" value="Piezo_TM1-24"/>
    <property type="match status" value="1"/>
</dbReference>
<dbReference type="Pfam" id="PF15917">
    <property type="entry name" value="Piezo_TM25-28"/>
    <property type="match status" value="1"/>
</dbReference>
<dbReference type="Pfam" id="PF23188">
    <property type="entry name" value="THU_Piezo1"/>
    <property type="match status" value="1"/>
</dbReference>
<gene>
    <name evidence="9" type="primary">Piezo</name>
    <name evidence="9" type="ORF">CG18103</name>
</gene>
<reference evidence="8" key="1">
    <citation type="journal article" date="2012" name="Nature">
        <title>Piezo proteins are pore-forming subunits of mechanically activated channels.</title>
        <authorList>
            <person name="Coste B."/>
            <person name="Xiao B."/>
            <person name="Santos J.S."/>
            <person name="Syeda R."/>
            <person name="Grandl J."/>
            <person name="Spencer K.S."/>
            <person name="Kim S.E."/>
            <person name="Schmidt M."/>
            <person name="Mathur J."/>
            <person name="Dubin A.E."/>
            <person name="Montal M."/>
            <person name="Patapoutian A."/>
        </authorList>
    </citation>
    <scope>NUCLEOTIDE SEQUENCE [MRNA]</scope>
    <scope>FUNCTION</scope>
    <scope>SUBCELLULAR LOCATION</scope>
</reference>
<reference evidence="7" key="2">
    <citation type="journal article" date="2000" name="Science">
        <title>The genome sequence of Drosophila melanogaster.</title>
        <authorList>
            <person name="Adams M.D."/>
            <person name="Celniker S.E."/>
            <person name="Holt R.A."/>
            <person name="Evans C.A."/>
            <person name="Gocayne J.D."/>
            <person name="Amanatides P.G."/>
            <person name="Scherer S.E."/>
            <person name="Li P.W."/>
            <person name="Hoskins R.A."/>
            <person name="Galle R.F."/>
            <person name="George R.A."/>
            <person name="Lewis S.E."/>
            <person name="Richards S."/>
            <person name="Ashburner M."/>
            <person name="Henderson S.N."/>
            <person name="Sutton G.G."/>
            <person name="Wortman J.R."/>
            <person name="Yandell M.D."/>
            <person name="Zhang Q."/>
            <person name="Chen L.X."/>
            <person name="Brandon R.C."/>
            <person name="Rogers Y.-H.C."/>
            <person name="Blazej R.G."/>
            <person name="Champe M."/>
            <person name="Pfeiffer B.D."/>
            <person name="Wan K.H."/>
            <person name="Doyle C."/>
            <person name="Baxter E.G."/>
            <person name="Helt G."/>
            <person name="Nelson C.R."/>
            <person name="Miklos G.L.G."/>
            <person name="Abril J.F."/>
            <person name="Agbayani A."/>
            <person name="An H.-J."/>
            <person name="Andrews-Pfannkoch C."/>
            <person name="Baldwin D."/>
            <person name="Ballew R.M."/>
            <person name="Basu A."/>
            <person name="Baxendale J."/>
            <person name="Bayraktaroglu L."/>
            <person name="Beasley E.M."/>
            <person name="Beeson K.Y."/>
            <person name="Benos P.V."/>
            <person name="Berman B.P."/>
            <person name="Bhandari D."/>
            <person name="Bolshakov S."/>
            <person name="Borkova D."/>
            <person name="Botchan M.R."/>
            <person name="Bouck J."/>
            <person name="Brokstein P."/>
            <person name="Brottier P."/>
            <person name="Burtis K.C."/>
            <person name="Busam D.A."/>
            <person name="Butler H."/>
            <person name="Cadieu E."/>
            <person name="Center A."/>
            <person name="Chandra I."/>
            <person name="Cherry J.M."/>
            <person name="Cawley S."/>
            <person name="Dahlke C."/>
            <person name="Davenport L.B."/>
            <person name="Davies P."/>
            <person name="de Pablos B."/>
            <person name="Delcher A."/>
            <person name="Deng Z."/>
            <person name="Mays A.D."/>
            <person name="Dew I."/>
            <person name="Dietz S.M."/>
            <person name="Dodson K."/>
            <person name="Doup L.E."/>
            <person name="Downes M."/>
            <person name="Dugan-Rocha S."/>
            <person name="Dunkov B.C."/>
            <person name="Dunn P."/>
            <person name="Durbin K.J."/>
            <person name="Evangelista C.C."/>
            <person name="Ferraz C."/>
            <person name="Ferriera S."/>
            <person name="Fleischmann W."/>
            <person name="Fosler C."/>
            <person name="Gabrielian A.E."/>
            <person name="Garg N.S."/>
            <person name="Gelbart W.M."/>
            <person name="Glasser K."/>
            <person name="Glodek A."/>
            <person name="Gong F."/>
            <person name="Gorrell J.H."/>
            <person name="Gu Z."/>
            <person name="Guan P."/>
            <person name="Harris M."/>
            <person name="Harris N.L."/>
            <person name="Harvey D.A."/>
            <person name="Heiman T.J."/>
            <person name="Hernandez J.R."/>
            <person name="Houck J."/>
            <person name="Hostin D."/>
            <person name="Houston K.A."/>
            <person name="Howland T.J."/>
            <person name="Wei M.-H."/>
            <person name="Ibegwam C."/>
            <person name="Jalali M."/>
            <person name="Kalush F."/>
            <person name="Karpen G.H."/>
            <person name="Ke Z."/>
            <person name="Kennison J.A."/>
            <person name="Ketchum K.A."/>
            <person name="Kimmel B.E."/>
            <person name="Kodira C.D."/>
            <person name="Kraft C.L."/>
            <person name="Kravitz S."/>
            <person name="Kulp D."/>
            <person name="Lai Z."/>
            <person name="Lasko P."/>
            <person name="Lei Y."/>
            <person name="Levitsky A.A."/>
            <person name="Li J.H."/>
            <person name="Li Z."/>
            <person name="Liang Y."/>
            <person name="Lin X."/>
            <person name="Liu X."/>
            <person name="Mattei B."/>
            <person name="McIntosh T.C."/>
            <person name="McLeod M.P."/>
            <person name="McPherson D."/>
            <person name="Merkulov G."/>
            <person name="Milshina N.V."/>
            <person name="Mobarry C."/>
            <person name="Morris J."/>
            <person name="Moshrefi A."/>
            <person name="Mount S.M."/>
            <person name="Moy M."/>
            <person name="Murphy B."/>
            <person name="Murphy L."/>
            <person name="Muzny D.M."/>
            <person name="Nelson D.L."/>
            <person name="Nelson D.R."/>
            <person name="Nelson K.A."/>
            <person name="Nixon K."/>
            <person name="Nusskern D.R."/>
            <person name="Pacleb J.M."/>
            <person name="Palazzolo M."/>
            <person name="Pittman G.S."/>
            <person name="Pan S."/>
            <person name="Pollard J."/>
            <person name="Puri V."/>
            <person name="Reese M.G."/>
            <person name="Reinert K."/>
            <person name="Remington K."/>
            <person name="Saunders R.D.C."/>
            <person name="Scheeler F."/>
            <person name="Shen H."/>
            <person name="Shue B.C."/>
            <person name="Siden-Kiamos I."/>
            <person name="Simpson M."/>
            <person name="Skupski M.P."/>
            <person name="Smith T.J."/>
            <person name="Spier E."/>
            <person name="Spradling A.C."/>
            <person name="Stapleton M."/>
            <person name="Strong R."/>
            <person name="Sun E."/>
            <person name="Svirskas R."/>
            <person name="Tector C."/>
            <person name="Turner R."/>
            <person name="Venter E."/>
            <person name="Wang A.H."/>
            <person name="Wang X."/>
            <person name="Wang Z.-Y."/>
            <person name="Wassarman D.A."/>
            <person name="Weinstock G.M."/>
            <person name="Weissenbach J."/>
            <person name="Williams S.M."/>
            <person name="Woodage T."/>
            <person name="Worley K.C."/>
            <person name="Wu D."/>
            <person name="Yang S."/>
            <person name="Yao Q.A."/>
            <person name="Ye J."/>
            <person name="Yeh R.-F."/>
            <person name="Zaveri J.S."/>
            <person name="Zhan M."/>
            <person name="Zhang G."/>
            <person name="Zhao Q."/>
            <person name="Zheng L."/>
            <person name="Zheng X.H."/>
            <person name="Zhong F.N."/>
            <person name="Zhong W."/>
            <person name="Zhou X."/>
            <person name="Zhu S.C."/>
            <person name="Zhu X."/>
            <person name="Smith H.O."/>
            <person name="Gibbs R.A."/>
            <person name="Myers E.W."/>
            <person name="Rubin G.M."/>
            <person name="Venter J.C."/>
        </authorList>
    </citation>
    <scope>NUCLEOTIDE SEQUENCE [LARGE SCALE GENOMIC DNA]</scope>
    <source>
        <strain>Berkeley</strain>
    </source>
</reference>
<reference evidence="7 10" key="3">
    <citation type="journal article" date="2002" name="Genome Biol.">
        <title>Annotation of the Drosophila melanogaster euchromatic genome: a systematic review.</title>
        <authorList>
            <person name="Misra S."/>
            <person name="Crosby M.A."/>
            <person name="Mungall C.J."/>
            <person name="Matthews B.B."/>
            <person name="Campbell K.S."/>
            <person name="Hradecky P."/>
            <person name="Huang Y."/>
            <person name="Kaminker J.S."/>
            <person name="Millburn G.H."/>
            <person name="Prochnik S.E."/>
            <person name="Smith C.D."/>
            <person name="Tupy J.L."/>
            <person name="Whitfield E.J."/>
            <person name="Bayraktaroglu L."/>
            <person name="Berman B.P."/>
            <person name="Bettencourt B.R."/>
            <person name="Celniker S.E."/>
            <person name="de Grey A.D.N.J."/>
            <person name="Drysdale R.A."/>
            <person name="Harris N.L."/>
            <person name="Richter J."/>
            <person name="Russo S."/>
            <person name="Schroeder A.J."/>
            <person name="Shu S.Q."/>
            <person name="Stapleton M."/>
            <person name="Yamada C."/>
            <person name="Ashburner M."/>
            <person name="Gelbart W.M."/>
            <person name="Rubin G.M."/>
            <person name="Lewis S.E."/>
        </authorList>
    </citation>
    <scope>GENOME REANNOTATION</scope>
    <source>
        <strain evidence="10">Berkeley</strain>
    </source>
</reference>
<reference evidence="6" key="4">
    <citation type="journal article" date="2012" name="Nature">
        <title>The role of Drosophila Piezo in mechanical nociception.</title>
        <authorList>
            <person name="Kim S.E."/>
            <person name="Coste B."/>
            <person name="Chadha A."/>
            <person name="Cook B."/>
            <person name="Patapoutian A."/>
        </authorList>
    </citation>
    <scope>FUNCTION</scope>
    <scope>DISRUPTION PHENOTYPE</scope>
</reference>
<reference key="5">
    <citation type="journal article" date="2020" name="Curr. Biol.">
        <title>Parallel Mechanosensory Pathways Direct Oviposition Decision-Making in Drosophila.</title>
        <authorList>
            <person name="Zhang L."/>
            <person name="Yu J."/>
            <person name="Guo X."/>
            <person name="Wei J."/>
            <person name="Liu T."/>
            <person name="Zhang W."/>
        </authorList>
    </citation>
    <scope>FUNCTION</scope>
    <scope>DISRUPTION PHENOTYPE</scope>
</reference>
<organism evidence="10">
    <name type="scientific">Drosophila melanogaster</name>
    <name type="common">Fruit fly</name>
    <dbReference type="NCBI Taxonomy" id="7227"/>
    <lineage>
        <taxon>Eukaryota</taxon>
        <taxon>Metazoa</taxon>
        <taxon>Ecdysozoa</taxon>
        <taxon>Arthropoda</taxon>
        <taxon>Hexapoda</taxon>
        <taxon>Insecta</taxon>
        <taxon>Pterygota</taxon>
        <taxon>Neoptera</taxon>
        <taxon>Endopterygota</taxon>
        <taxon>Diptera</taxon>
        <taxon>Brachycera</taxon>
        <taxon>Muscomorpha</taxon>
        <taxon>Ephydroidea</taxon>
        <taxon>Drosophilidae</taxon>
        <taxon>Drosophila</taxon>
        <taxon>Sophophora</taxon>
    </lineage>
</organism>
<evidence type="ECO:0000255" key="1"/>
<evidence type="ECO:0000256" key="2">
    <source>
        <dbReference type="SAM" id="MobiDB-lite"/>
    </source>
</evidence>
<evidence type="ECO:0000269" key="3">
    <source>
    </source>
</evidence>
<evidence type="ECO:0000269" key="4">
    <source>
    </source>
</evidence>
<evidence type="ECO:0000269" key="5">
    <source>
    </source>
</evidence>
<evidence type="ECO:0000305" key="6"/>
<evidence type="ECO:0000312" key="7">
    <source>
        <dbReference type="EMBL" id="ADV36969.1"/>
    </source>
</evidence>
<evidence type="ECO:0000312" key="8">
    <source>
        <dbReference type="EMBL" id="AFB77909.1"/>
    </source>
</evidence>
<evidence type="ECO:0000312" key="9">
    <source>
        <dbReference type="FlyBase" id="FBgn0264953"/>
    </source>
</evidence>
<evidence type="ECO:0000312" key="10">
    <source>
        <dbReference type="Proteomes" id="UP000000803"/>
    </source>
</evidence>
<protein>
    <recommendedName>
        <fullName evidence="6">Piezo-type mechanosensitive ion channel component</fullName>
    </recommendedName>
</protein>
<keyword id="KW-1003">Cell membrane</keyword>
<keyword id="KW-0407">Ion channel</keyword>
<keyword id="KW-0406">Ion transport</keyword>
<keyword id="KW-0472">Membrane</keyword>
<keyword id="KW-1185">Reference proteome</keyword>
<keyword id="KW-0716">Sensory transduction</keyword>
<keyword id="KW-0812">Transmembrane</keyword>
<keyword id="KW-1133">Transmembrane helix</keyword>
<keyword id="KW-0813">Transport</keyword>
<sequence>MVFSYACMVLQRIVVPAVLVLAALMRPVGISFVYLLMFFVSPFVPLATRRNFKGSVTAFFIILLTLSTLVLLGHITLQILAVSLTLPIYNCSFSERLLRHIGFVSFIDLQPFAIIEWLVPEVLVFATSLGSYLTVKRVASQPVGAEQLENGEVVDGQAENAQTSSQPSAADANGGDVQQATVTTPLQQQQQQLRKRVSMISQHIHFEGLVKISPLFCLATLFFAAVLRPSVPGGFYFLIFLLSGTYWATCQTLQRGFALLLRCVMVVLVLHSLSIVSYQTPWMQSHLNHTTLTARLIGLEPLIESYCSPDIRVFLYNNKLSLDSYLNPFALFFAYFALALTTKHLIKPRLVRQSTRKARTPQPLESGSSVAPSVTQRGNDMQLESMEQRSEQENTTTSILDQISYGFVSVGGFIYQNSYIFTNILMMAWSIVYHSWLTFVLLLSANVLWMIPNQRKAMMRSSPFIVLYAEALLIAQYIYGMDLNNEELPTSVPTAGINLQQIGFERPIENQMRPCVPLIVKTAFVLMFWVTSRQFFKEKRDRRRDSTLADFIAPLQITVGSAGSSYLINDGKKTSKFLKKAGDVIKNLLVRLWIWLLVLVIFLCAITGENMTGFRICYMALFLFFLLVFQSSSKAWVKIMYGFWLFLIFYAMSILILIYTYQFDKFDTYWSDYLNVSATLQKDIGLKRYQTKDLFLHLVSPTIIVILTVIQVHYFHKRFIASLQQQPLAGGSAQQKPTETTALEPAPSKRRGSAGSLRKSQGPSAEAAPGATTDFETSVRDLVRISFRKIKNKSEYIFKNFKDVFWRFLELHIMKAVYIAAFVCSVSEVCVLHIIFVGFCVLGATSRKAVQVVISRLISFIVTVIVLSKMIYQIEYLSHSQHNVVCSDNRTANNAEWIGLTKADKVTGGLMSLLRTYIIYMVIVTMHAVISLRQLQMRVKIGALNAPPTKLLFPNIIRADAEKDLVGLVKYLLNFGFYKFGIEISLIALVSTITYRQDIVAVVYALWLVVLLLLRRSQCAKIWGVFQAFFAISILTQYIVLVGLPPSSCLVFPWDEGPFGEGIQRWAMLPGALHFNHVPKLIFDFIVLVILNRQKSIFCIEQRYASNDDYPGGSNRSVIADIAQLGRVPFDNPTHDFCSYIRNYSDILKNGVLCGFYWFTLAVVFLAGTNIADLLALGYLIGAFIFLWQGSDFYLRPIHTIIFRWKWLLAFNVANILIKTSFQMAGCLFMTQLTKDCCWLVHMLGITCTSNVLTEQIMLPEEAELALKPGECPKITHQVVLLWDTICFAFIIFQLRIFKSHYFCHIITDTKANNILASRGADIIESLRHKQIAHRHDHEKQVLHKIKRKMERIRATQQKMLRPLDKQTHFDEHGYPLPAPTVRRRKEIKLHPHATRAGDYYMFEEMDDKFELDLIHDEIDFLEEENITESEMKMQRRKTLYDKSKDAPTGEFPSTSKGISKERDAATASSSASPAPTRDVGDLPVIPPPSTGLGREQTSKETSDSKSKMEVDSGEVTAKDSDEDFDTNPIIRLLEGFLVTLTIRLNRFSRNYRFVNRILAGEKKTLKESSSLNRLGLSSAAAMFHFLKSNLESDESEPPASSSTPRRVVIAPPNATEHSDPTSTTLNTNTTTTPLSPPEPLQPLQPLQPNTTSTPQQQHQHIRAAEEIIELPVDTVDGVAHRKQSINSSPPAKGAGEFNLEEENFAQRDHHIIVEVLISSWYALLANTDLICYIVVFINQVVNASLISLPLPIMVFLWGTLSLPRPTKTFWVTLIAYTQAIVLIKCIFQFKLIWSNYHQLPNQPLTPAKIFGVENKAHYAIYDLILLLVLFLHRYLLKSQGLWKSGYKDTDNQFTKPTASIDERDDSDNLSQPDSRQLNDDAAQKLSLQVSQASLPGSPEFSKTGINQLERTKYTSSLYKFFFSLVHKSRLATDVYALMFLCDFVNFFVLLFGFTAFGTQQTESDEGVQTYLAENKVPIPFLIMLLVQFLLIVIDRALYLRKALVNKIIFHFFSVIGIHIWMFFVVPAVTERTFNSLAPPIIFYVIKCFYMLLSSYQIKSGYPKRILGNFFTKGFSMVNMIAFKVYMQIPFLYELRTILDWVCIDSTMTIFDWLKMEDIFSNIYLIRCTRQSETDFPAMRAQKKASLSKLIMGGTIVLLIVICIWGPLCLFALGNAVGTSNVPFHVSLSIRIGPYDPIYTTNNYDSIFEINPEMYSQMTNAYIKEKQALTFIAGYDATDVAAVRLAGNSPSLWNIAPPDRQRLLNDLRNNHTLKARFSYSLTRKAPAKGLKENVGDEHAISLDESFEGRAALIHMLSETHDVEPIYSNGTTNGTTPEVEEVVVIPGMIPKFIKVLNSGDAAVVSVLSPKHYDYRPLVIKMHRDNETNGLWWEIRDYCNDTFYNETLSKFAYSNCTSGIVMYTFNDKKFPSTFSFLTAGGIIGLYTTFVLLASRFMKSFIGGQNRKIMFEDLPYVDRVLQLCLDIYLVREALEFALEEDLFAKLLFLYRSPETLIKWTRPKEEYVDDDGDTDSIPSRMSVRRPEQLQPQQPQ</sequence>
<proteinExistence type="evidence at transcript level"/>